<proteinExistence type="inferred from homology"/>
<protein>
    <recommendedName>
        <fullName evidence="1">Regulatory protein RecX</fullName>
    </recommendedName>
</protein>
<accession>Q03YE0</accession>
<evidence type="ECO:0000255" key="1">
    <source>
        <dbReference type="HAMAP-Rule" id="MF_01114"/>
    </source>
</evidence>
<dbReference type="EMBL" id="CP000414">
    <property type="protein sequence ID" value="ABJ61782.1"/>
    <property type="molecule type" value="Genomic_DNA"/>
</dbReference>
<dbReference type="RefSeq" id="WP_011679474.1">
    <property type="nucleotide sequence ID" value="NC_008531.1"/>
</dbReference>
<dbReference type="SMR" id="Q03YE0"/>
<dbReference type="EnsemblBacteria" id="ABJ61782">
    <property type="protein sequence ID" value="ABJ61782"/>
    <property type="gene ID" value="LEUM_0672"/>
</dbReference>
<dbReference type="GeneID" id="29576028"/>
<dbReference type="KEGG" id="lme:LEUM_0672"/>
<dbReference type="eggNOG" id="COG2137">
    <property type="taxonomic scope" value="Bacteria"/>
</dbReference>
<dbReference type="HOGENOM" id="CLU_066607_4_0_9"/>
<dbReference type="Proteomes" id="UP000000362">
    <property type="component" value="Chromosome"/>
</dbReference>
<dbReference type="GO" id="GO:0005737">
    <property type="term" value="C:cytoplasm"/>
    <property type="evidence" value="ECO:0007669"/>
    <property type="project" value="UniProtKB-SubCell"/>
</dbReference>
<dbReference type="GO" id="GO:0006282">
    <property type="term" value="P:regulation of DNA repair"/>
    <property type="evidence" value="ECO:0007669"/>
    <property type="project" value="UniProtKB-UniRule"/>
</dbReference>
<dbReference type="Gene3D" id="1.10.10.10">
    <property type="entry name" value="Winged helix-like DNA-binding domain superfamily/Winged helix DNA-binding domain"/>
    <property type="match status" value="4"/>
</dbReference>
<dbReference type="HAMAP" id="MF_01114">
    <property type="entry name" value="RecX"/>
    <property type="match status" value="1"/>
</dbReference>
<dbReference type="InterPro" id="IPR053926">
    <property type="entry name" value="RecX_HTH_1st"/>
</dbReference>
<dbReference type="InterPro" id="IPR053924">
    <property type="entry name" value="RecX_HTH_2nd"/>
</dbReference>
<dbReference type="InterPro" id="IPR053925">
    <property type="entry name" value="RecX_HTH_3rd"/>
</dbReference>
<dbReference type="InterPro" id="IPR003783">
    <property type="entry name" value="Regulatory_RecX"/>
</dbReference>
<dbReference type="InterPro" id="IPR036388">
    <property type="entry name" value="WH-like_DNA-bd_sf"/>
</dbReference>
<dbReference type="NCBIfam" id="NF010733">
    <property type="entry name" value="PRK14135.1"/>
    <property type="match status" value="1"/>
</dbReference>
<dbReference type="PANTHER" id="PTHR33602">
    <property type="entry name" value="REGULATORY PROTEIN RECX FAMILY PROTEIN"/>
    <property type="match status" value="1"/>
</dbReference>
<dbReference type="PANTHER" id="PTHR33602:SF1">
    <property type="entry name" value="REGULATORY PROTEIN RECX FAMILY PROTEIN"/>
    <property type="match status" value="1"/>
</dbReference>
<dbReference type="Pfam" id="PF21982">
    <property type="entry name" value="RecX_HTH1"/>
    <property type="match status" value="1"/>
</dbReference>
<dbReference type="Pfam" id="PF02631">
    <property type="entry name" value="RecX_HTH2"/>
    <property type="match status" value="1"/>
</dbReference>
<dbReference type="Pfam" id="PF21981">
    <property type="entry name" value="RecX_HTH3"/>
    <property type="match status" value="2"/>
</dbReference>
<feature type="chain" id="PRO_1000084982" description="Regulatory protein RecX">
    <location>
        <begin position="1"/>
        <end position="267"/>
    </location>
</feature>
<sequence>MKKITKISIQKKAGRYNIDLDNQFAFGVAESVLIKFGLAKGRELDDELIAEIKHNDSIAKALSIALNFLSHSLHTVKQVKQKMSEKEVSESIQDEVVAQLYEQKYIDDLNYAQHYVSTKKIISPKGPNVIKMDLKQAGVNDDDIETALSDYTHEEQIEIAEKLALKSATTYKRESTRAKKQKIVQALATKGFSFDIAEIVVDRVITENDDEIELENIKRQAEKSWRRYRNEVPSQRIYKTKNSLYTKGYNAELINVVIHELEVSADD</sequence>
<comment type="function">
    <text evidence="1">Modulates RecA activity.</text>
</comment>
<comment type="subcellular location">
    <subcellularLocation>
        <location evidence="1">Cytoplasm</location>
    </subcellularLocation>
</comment>
<comment type="similarity">
    <text evidence="1">Belongs to the RecX family.</text>
</comment>
<keyword id="KW-0963">Cytoplasm</keyword>
<keyword id="KW-1185">Reference proteome</keyword>
<organism>
    <name type="scientific">Leuconostoc mesenteroides subsp. mesenteroides (strain ATCC 8293 / DSM 20343 / BCRC 11652 / CCM 1803 / JCM 6124 / NCDO 523 / NBRC 100496 / NCIMB 8023 / NCTC 12954 / NRRL B-1118 / 37Y)</name>
    <dbReference type="NCBI Taxonomy" id="203120"/>
    <lineage>
        <taxon>Bacteria</taxon>
        <taxon>Bacillati</taxon>
        <taxon>Bacillota</taxon>
        <taxon>Bacilli</taxon>
        <taxon>Lactobacillales</taxon>
        <taxon>Lactobacillaceae</taxon>
        <taxon>Leuconostoc</taxon>
    </lineage>
</organism>
<reference key="1">
    <citation type="journal article" date="2006" name="Proc. Natl. Acad. Sci. U.S.A.">
        <title>Comparative genomics of the lactic acid bacteria.</title>
        <authorList>
            <person name="Makarova K.S."/>
            <person name="Slesarev A."/>
            <person name="Wolf Y.I."/>
            <person name="Sorokin A."/>
            <person name="Mirkin B."/>
            <person name="Koonin E.V."/>
            <person name="Pavlov A."/>
            <person name="Pavlova N."/>
            <person name="Karamychev V."/>
            <person name="Polouchine N."/>
            <person name="Shakhova V."/>
            <person name="Grigoriev I."/>
            <person name="Lou Y."/>
            <person name="Rohksar D."/>
            <person name="Lucas S."/>
            <person name="Huang K."/>
            <person name="Goodstein D.M."/>
            <person name="Hawkins T."/>
            <person name="Plengvidhya V."/>
            <person name="Welker D."/>
            <person name="Hughes J."/>
            <person name="Goh Y."/>
            <person name="Benson A."/>
            <person name="Baldwin K."/>
            <person name="Lee J.-H."/>
            <person name="Diaz-Muniz I."/>
            <person name="Dosti B."/>
            <person name="Smeianov V."/>
            <person name="Wechter W."/>
            <person name="Barabote R."/>
            <person name="Lorca G."/>
            <person name="Altermann E."/>
            <person name="Barrangou R."/>
            <person name="Ganesan B."/>
            <person name="Xie Y."/>
            <person name="Rawsthorne H."/>
            <person name="Tamir D."/>
            <person name="Parker C."/>
            <person name="Breidt F."/>
            <person name="Broadbent J.R."/>
            <person name="Hutkins R."/>
            <person name="O'Sullivan D."/>
            <person name="Steele J."/>
            <person name="Unlu G."/>
            <person name="Saier M.H. Jr."/>
            <person name="Klaenhammer T."/>
            <person name="Richardson P."/>
            <person name="Kozyavkin S."/>
            <person name="Weimer B.C."/>
            <person name="Mills D.A."/>
        </authorList>
    </citation>
    <scope>NUCLEOTIDE SEQUENCE [LARGE SCALE GENOMIC DNA]</scope>
    <source>
        <strain>ATCC 8293 / DSM 20343 / BCRC 11652 / CCM 1803 / JCM 6124 / NCDO 523 / NBRC 100496 / NCIMB 8023 / NCTC 12954 / NRRL B-1118 / 37Y</strain>
    </source>
</reference>
<gene>
    <name evidence="1" type="primary">recX</name>
    <name type="ordered locus">LEUM_0672</name>
</gene>
<name>RECX_LEUMM</name>